<sequence length="353" mass="40721">MGCGMSTEDKEGKARNEEIENQLKRDKMMQRNEIKMLLLGAGESGKSTILKQMKLIHEGGYSRDERESFKEIIYSNTVQSMRVILEAMESLELPLEDARNEYHVQTVFMQPAQIEGDSLPSEVGNAIAALWQDAGVQECFKRSREYQLNDSAKYYFDSIERIAQSDYLPTDQDVLRSRVKTTGITETTFIIGDLTYRMFDVGGQRSERKKWIHCFENVTTILFLVAISEYDQLLFEDETVNRMQEALTLFDSICNSRWFVKTSIILFLNKIDRFKEKLPVSPMKNYFPDYEGGADYAAACDYILNRFVSLNQAEQKQIYTHFTCATDTTQIRFVMAAVNDIIIQENLRLCGLI</sequence>
<name>GPA1_EMENI</name>
<feature type="initiator methionine" description="Removed" evidence="1">
    <location>
        <position position="1"/>
    </location>
</feature>
<feature type="chain" id="PRO_0000203601" description="Guanine nucleotide-binding protein subunit alpha">
    <location>
        <begin position="2"/>
        <end position="353"/>
    </location>
</feature>
<feature type="domain" description="G-alpha" evidence="4">
    <location>
        <begin position="32"/>
        <end position="353"/>
    </location>
</feature>
<feature type="region of interest" description="Disordered" evidence="5">
    <location>
        <begin position="1"/>
        <end position="25"/>
    </location>
</feature>
<feature type="region of interest" description="G1 motif" evidence="4">
    <location>
        <begin position="35"/>
        <end position="48"/>
    </location>
</feature>
<feature type="region of interest" description="G2 motif" evidence="4">
    <location>
        <begin position="173"/>
        <end position="181"/>
    </location>
</feature>
<feature type="region of interest" description="G3 motif" evidence="4">
    <location>
        <begin position="196"/>
        <end position="205"/>
    </location>
</feature>
<feature type="region of interest" description="G4 motif" evidence="4">
    <location>
        <begin position="265"/>
        <end position="272"/>
    </location>
</feature>
<feature type="region of interest" description="G5 motif" evidence="4">
    <location>
        <begin position="323"/>
        <end position="328"/>
    </location>
</feature>
<feature type="compositionally biased region" description="Basic and acidic residues" evidence="5">
    <location>
        <begin position="7"/>
        <end position="25"/>
    </location>
</feature>
<feature type="binding site" evidence="3">
    <location>
        <position position="43"/>
    </location>
    <ligand>
        <name>GTP</name>
        <dbReference type="ChEBI" id="CHEBI:37565"/>
    </ligand>
</feature>
<feature type="binding site" evidence="3">
    <location>
        <position position="44"/>
    </location>
    <ligand>
        <name>GTP</name>
        <dbReference type="ChEBI" id="CHEBI:37565"/>
    </ligand>
</feature>
<feature type="binding site" evidence="3">
    <location>
        <position position="45"/>
    </location>
    <ligand>
        <name>GTP</name>
        <dbReference type="ChEBI" id="CHEBI:37565"/>
    </ligand>
</feature>
<feature type="binding site" evidence="3">
    <location>
        <position position="46"/>
    </location>
    <ligand>
        <name>GTP</name>
        <dbReference type="ChEBI" id="CHEBI:37565"/>
    </ligand>
</feature>
<feature type="binding site" evidence="3">
    <location>
        <position position="47"/>
    </location>
    <ligand>
        <name>GTP</name>
        <dbReference type="ChEBI" id="CHEBI:37565"/>
    </ligand>
</feature>
<feature type="binding site" evidence="3">
    <location>
        <position position="47"/>
    </location>
    <ligand>
        <name>Mg(2+)</name>
        <dbReference type="ChEBI" id="CHEBI:18420"/>
    </ligand>
</feature>
<feature type="binding site" evidence="3">
    <location>
        <position position="48"/>
    </location>
    <ligand>
        <name>GTP</name>
        <dbReference type="ChEBI" id="CHEBI:37565"/>
    </ligand>
</feature>
<feature type="binding site" evidence="3">
    <location>
        <position position="150"/>
    </location>
    <ligand>
        <name>GTP</name>
        <dbReference type="ChEBI" id="CHEBI:37565"/>
    </ligand>
</feature>
<feature type="binding site" evidence="3">
    <location>
        <position position="175"/>
    </location>
    <ligand>
        <name>GTP</name>
        <dbReference type="ChEBI" id="CHEBI:37565"/>
    </ligand>
</feature>
<feature type="binding site" evidence="3">
    <location>
        <position position="181"/>
    </location>
    <ligand>
        <name>GTP</name>
        <dbReference type="ChEBI" id="CHEBI:37565"/>
    </ligand>
</feature>
<feature type="binding site" evidence="3">
    <location>
        <position position="181"/>
    </location>
    <ligand>
        <name>Mg(2+)</name>
        <dbReference type="ChEBI" id="CHEBI:18420"/>
    </ligand>
</feature>
<feature type="binding site" evidence="3">
    <location>
        <position position="203"/>
    </location>
    <ligand>
        <name>GTP</name>
        <dbReference type="ChEBI" id="CHEBI:37565"/>
    </ligand>
</feature>
<feature type="binding site" evidence="3">
    <location>
        <position position="269"/>
    </location>
    <ligand>
        <name>GTP</name>
        <dbReference type="ChEBI" id="CHEBI:37565"/>
    </ligand>
</feature>
<feature type="binding site" evidence="3">
    <location>
        <position position="270"/>
    </location>
    <ligand>
        <name>GTP</name>
        <dbReference type="ChEBI" id="CHEBI:37565"/>
    </ligand>
</feature>
<feature type="binding site" evidence="3">
    <location>
        <position position="272"/>
    </location>
    <ligand>
        <name>GTP</name>
        <dbReference type="ChEBI" id="CHEBI:37565"/>
    </ligand>
</feature>
<feature type="binding site" evidence="3">
    <location>
        <position position="325"/>
    </location>
    <ligand>
        <name>GTP</name>
        <dbReference type="ChEBI" id="CHEBI:37565"/>
    </ligand>
</feature>
<feature type="lipid moiety-binding region" description="N-myristoyl glycine" evidence="2">
    <location>
        <position position="2"/>
    </location>
</feature>
<feature type="lipid moiety-binding region" description="S-palmitoyl cysteine" evidence="2">
    <location>
        <position position="3"/>
    </location>
</feature>
<feature type="mutagenesis site" description="Loss of intrinsic GTPase activity leading to constitutive signaling." evidence="6">
    <original>G</original>
    <variation>R</variation>
    <location>
        <position position="42"/>
    </location>
</feature>
<feature type="mutagenesis site" description="Reduced growth without impairing sporulation." evidence="6">
    <original>G</original>
    <variation>R</variation>
    <location>
        <position position="203"/>
    </location>
</feature>
<keyword id="KW-0342">GTP-binding</keyword>
<keyword id="KW-0378">Hydrolase</keyword>
<keyword id="KW-0449">Lipoprotein</keyword>
<keyword id="KW-0460">Magnesium</keyword>
<keyword id="KW-0479">Metal-binding</keyword>
<keyword id="KW-0519">Myristate</keyword>
<keyword id="KW-0547">Nucleotide-binding</keyword>
<keyword id="KW-0564">Palmitate</keyword>
<keyword id="KW-1185">Reference proteome</keyword>
<keyword id="KW-0807">Transducer</keyword>
<gene>
    <name type="primary">fadA</name>
    <name type="ORF">AN0651</name>
</gene>
<comment type="function">
    <text>Guanine nucleotide-binding proteins (G proteins) are involved as modulators or transducers in various transmembrane signaling systems.</text>
</comment>
<comment type="cofactor">
    <cofactor evidence="3">
        <name>Mg(2+)</name>
        <dbReference type="ChEBI" id="CHEBI:18420"/>
    </cofactor>
</comment>
<comment type="subunit">
    <text>G proteins are composed of 3 units; alpha, beta and gamma. The alpha chain contains the guanine nucleotide binding site.</text>
</comment>
<comment type="similarity">
    <text evidence="7">Belongs to the G-alpha family. G(q) subfamily.</text>
</comment>
<organism>
    <name type="scientific">Emericella nidulans (strain FGSC A4 / ATCC 38163 / CBS 112.46 / NRRL 194 / M139)</name>
    <name type="common">Aspergillus nidulans</name>
    <dbReference type="NCBI Taxonomy" id="227321"/>
    <lineage>
        <taxon>Eukaryota</taxon>
        <taxon>Fungi</taxon>
        <taxon>Dikarya</taxon>
        <taxon>Ascomycota</taxon>
        <taxon>Pezizomycotina</taxon>
        <taxon>Eurotiomycetes</taxon>
        <taxon>Eurotiomycetidae</taxon>
        <taxon>Eurotiales</taxon>
        <taxon>Aspergillaceae</taxon>
        <taxon>Aspergillus</taxon>
        <taxon>Aspergillus subgen. Nidulantes</taxon>
    </lineage>
</organism>
<evidence type="ECO:0000250" key="1"/>
<evidence type="ECO:0000250" key="2">
    <source>
        <dbReference type="UniProtKB" id="P08539"/>
    </source>
</evidence>
<evidence type="ECO:0000250" key="3">
    <source>
        <dbReference type="UniProtKB" id="P18064"/>
    </source>
</evidence>
<evidence type="ECO:0000255" key="4">
    <source>
        <dbReference type="PROSITE-ProRule" id="PRU01230"/>
    </source>
</evidence>
<evidence type="ECO:0000256" key="5">
    <source>
        <dbReference type="SAM" id="MobiDB-lite"/>
    </source>
</evidence>
<evidence type="ECO:0000269" key="6">
    <source>
    </source>
</evidence>
<evidence type="ECO:0000305" key="7"/>
<protein>
    <recommendedName>
        <fullName>Guanine nucleotide-binding protein subunit alpha</fullName>
    </recommendedName>
</protein>
<reference key="1">
    <citation type="journal article" date="1996" name="EMBO J.">
        <title>The Aspergillus FlbA RGS domain protein antagonizes G protein signaling to block proliferation and allow development.</title>
        <authorList>
            <person name="Yu J.H."/>
            <person name="Wieser J."/>
            <person name="Adams T.H."/>
        </authorList>
    </citation>
    <scope>NUCLEOTIDE SEQUENCE [GENOMIC DNA]</scope>
    <scope>MUTAGENESIS OF GLY-42 AND GLY-203</scope>
    <source>
        <strain>FGSC A4 / ATCC 38163 / CBS 112.46 / NRRL 194 / M139</strain>
    </source>
</reference>
<reference key="2">
    <citation type="journal article" date="2005" name="Nature">
        <title>Sequencing of Aspergillus nidulans and comparative analysis with A. fumigatus and A. oryzae.</title>
        <authorList>
            <person name="Galagan J.E."/>
            <person name="Calvo S.E."/>
            <person name="Cuomo C."/>
            <person name="Ma L.-J."/>
            <person name="Wortman J.R."/>
            <person name="Batzoglou S."/>
            <person name="Lee S.-I."/>
            <person name="Bastuerkmen M."/>
            <person name="Spevak C.C."/>
            <person name="Clutterbuck J."/>
            <person name="Kapitonov V."/>
            <person name="Jurka J."/>
            <person name="Scazzocchio C."/>
            <person name="Farman M.L."/>
            <person name="Butler J."/>
            <person name="Purcell S."/>
            <person name="Harris S."/>
            <person name="Braus G.H."/>
            <person name="Draht O."/>
            <person name="Busch S."/>
            <person name="D'Enfert C."/>
            <person name="Bouchier C."/>
            <person name="Goldman G.H."/>
            <person name="Bell-Pedersen D."/>
            <person name="Griffiths-Jones S."/>
            <person name="Doonan J.H."/>
            <person name="Yu J."/>
            <person name="Vienken K."/>
            <person name="Pain A."/>
            <person name="Freitag M."/>
            <person name="Selker E.U."/>
            <person name="Archer D.B."/>
            <person name="Penalva M.A."/>
            <person name="Oakley B.R."/>
            <person name="Momany M."/>
            <person name="Tanaka T."/>
            <person name="Kumagai T."/>
            <person name="Asai K."/>
            <person name="Machida M."/>
            <person name="Nierman W.C."/>
            <person name="Denning D.W."/>
            <person name="Caddick M.X."/>
            <person name="Hynes M."/>
            <person name="Paoletti M."/>
            <person name="Fischer R."/>
            <person name="Miller B.L."/>
            <person name="Dyer P.S."/>
            <person name="Sachs M.S."/>
            <person name="Osmani S.A."/>
            <person name="Birren B.W."/>
        </authorList>
    </citation>
    <scope>NUCLEOTIDE SEQUENCE [LARGE SCALE GENOMIC DNA]</scope>
    <source>
        <strain>FGSC A4 / ATCC 38163 / CBS 112.46 / NRRL 194 / M139</strain>
    </source>
</reference>
<reference key="3">
    <citation type="journal article" date="2009" name="Fungal Genet. Biol.">
        <title>The 2008 update of the Aspergillus nidulans genome annotation: a community effort.</title>
        <authorList>
            <person name="Wortman J.R."/>
            <person name="Gilsenan J.M."/>
            <person name="Joardar V."/>
            <person name="Deegan J."/>
            <person name="Clutterbuck J."/>
            <person name="Andersen M.R."/>
            <person name="Archer D."/>
            <person name="Bencina M."/>
            <person name="Braus G."/>
            <person name="Coutinho P."/>
            <person name="von Dohren H."/>
            <person name="Doonan J."/>
            <person name="Driessen A.J."/>
            <person name="Durek P."/>
            <person name="Espeso E."/>
            <person name="Fekete E."/>
            <person name="Flipphi M."/>
            <person name="Estrada C.G."/>
            <person name="Geysens S."/>
            <person name="Goldman G."/>
            <person name="de Groot P.W."/>
            <person name="Hansen K."/>
            <person name="Harris S.D."/>
            <person name="Heinekamp T."/>
            <person name="Helmstaedt K."/>
            <person name="Henrissat B."/>
            <person name="Hofmann G."/>
            <person name="Homan T."/>
            <person name="Horio T."/>
            <person name="Horiuchi H."/>
            <person name="James S."/>
            <person name="Jones M."/>
            <person name="Karaffa L."/>
            <person name="Karanyi Z."/>
            <person name="Kato M."/>
            <person name="Keller N."/>
            <person name="Kelly D.E."/>
            <person name="Kiel J.A."/>
            <person name="Kim J.M."/>
            <person name="van der Klei I.J."/>
            <person name="Klis F.M."/>
            <person name="Kovalchuk A."/>
            <person name="Krasevec N."/>
            <person name="Kubicek C.P."/>
            <person name="Liu B."/>
            <person name="Maccabe A."/>
            <person name="Meyer V."/>
            <person name="Mirabito P."/>
            <person name="Miskei M."/>
            <person name="Mos M."/>
            <person name="Mullins J."/>
            <person name="Nelson D.R."/>
            <person name="Nielsen J."/>
            <person name="Oakley B.R."/>
            <person name="Osmani S.A."/>
            <person name="Pakula T."/>
            <person name="Paszewski A."/>
            <person name="Paulsen I."/>
            <person name="Pilsyk S."/>
            <person name="Pocsi I."/>
            <person name="Punt P.J."/>
            <person name="Ram A.F."/>
            <person name="Ren Q."/>
            <person name="Robellet X."/>
            <person name="Robson G."/>
            <person name="Seiboth B."/>
            <person name="van Solingen P."/>
            <person name="Specht T."/>
            <person name="Sun J."/>
            <person name="Taheri-Talesh N."/>
            <person name="Takeshita N."/>
            <person name="Ussery D."/>
            <person name="vanKuyk P.A."/>
            <person name="Visser H."/>
            <person name="van de Vondervoort P.J."/>
            <person name="de Vries R.P."/>
            <person name="Walton J."/>
            <person name="Xiang X."/>
            <person name="Xiong Y."/>
            <person name="Zeng A.P."/>
            <person name="Brandt B.W."/>
            <person name="Cornell M.J."/>
            <person name="van den Hondel C.A."/>
            <person name="Visser J."/>
            <person name="Oliver S.G."/>
            <person name="Turner G."/>
        </authorList>
    </citation>
    <scope>GENOME REANNOTATION</scope>
    <source>
        <strain>FGSC A4 / ATCC 38163 / CBS 112.46 / NRRL 194 / M139</strain>
    </source>
</reference>
<accession>Q00743</accession>
<accession>C8VS02</accession>
<accession>Q5BFM9</accession>
<proteinExistence type="evidence at protein level"/>
<dbReference type="EMBL" id="U49917">
    <property type="protein sequence ID" value="AAC49476.1"/>
    <property type="molecule type" value="Genomic_DNA"/>
</dbReference>
<dbReference type="EMBL" id="AACD01000010">
    <property type="protein sequence ID" value="EAA65427.1"/>
    <property type="molecule type" value="Genomic_DNA"/>
</dbReference>
<dbReference type="EMBL" id="BN001308">
    <property type="protein sequence ID" value="CBF89057.1"/>
    <property type="molecule type" value="Genomic_DNA"/>
</dbReference>
<dbReference type="PIR" id="S71965">
    <property type="entry name" value="S71965"/>
</dbReference>
<dbReference type="RefSeq" id="XP_658255.1">
    <property type="nucleotide sequence ID" value="XM_653163.2"/>
</dbReference>
<dbReference type="SMR" id="Q00743"/>
<dbReference type="FunCoup" id="Q00743">
    <property type="interactions" value="499"/>
</dbReference>
<dbReference type="STRING" id="227321.Q00743"/>
<dbReference type="EnsemblFungi" id="CBF89057">
    <property type="protein sequence ID" value="CBF89057"/>
    <property type="gene ID" value="ANIA_00651"/>
</dbReference>
<dbReference type="GeneID" id="2876430"/>
<dbReference type="KEGG" id="ani:ANIA_00651"/>
<dbReference type="VEuPathDB" id="FungiDB:AN0651"/>
<dbReference type="eggNOG" id="KOG0082">
    <property type="taxonomic scope" value="Eukaryota"/>
</dbReference>
<dbReference type="HOGENOM" id="CLU_014184_6_0_1"/>
<dbReference type="InParanoid" id="Q00743"/>
<dbReference type="OMA" id="QVIWADA"/>
<dbReference type="OrthoDB" id="5817230at2759"/>
<dbReference type="Proteomes" id="UP000000560">
    <property type="component" value="Chromosome VIII"/>
</dbReference>
<dbReference type="GO" id="GO:0005737">
    <property type="term" value="C:cytoplasm"/>
    <property type="evidence" value="ECO:0000318"/>
    <property type="project" value="GO_Central"/>
</dbReference>
<dbReference type="GO" id="GO:0005834">
    <property type="term" value="C:heterotrimeric G-protein complex"/>
    <property type="evidence" value="ECO:0000247"/>
    <property type="project" value="AspGD"/>
</dbReference>
<dbReference type="GO" id="GO:0001664">
    <property type="term" value="F:G protein-coupled receptor binding"/>
    <property type="evidence" value="ECO:0000318"/>
    <property type="project" value="GO_Central"/>
</dbReference>
<dbReference type="GO" id="GO:0031683">
    <property type="term" value="F:G-protein beta/gamma-subunit complex binding"/>
    <property type="evidence" value="ECO:0000318"/>
    <property type="project" value="GO_Central"/>
</dbReference>
<dbReference type="GO" id="GO:0005525">
    <property type="term" value="F:GTP binding"/>
    <property type="evidence" value="ECO:0007669"/>
    <property type="project" value="UniProtKB-KW"/>
</dbReference>
<dbReference type="GO" id="GO:0003924">
    <property type="term" value="F:GTPase activity"/>
    <property type="evidence" value="ECO:0000315"/>
    <property type="project" value="AspGD"/>
</dbReference>
<dbReference type="GO" id="GO:0019001">
    <property type="term" value="F:guanyl nucleotide binding"/>
    <property type="evidence" value="ECO:0000315"/>
    <property type="project" value="AspGD"/>
</dbReference>
<dbReference type="GO" id="GO:0046872">
    <property type="term" value="F:metal ion binding"/>
    <property type="evidence" value="ECO:0007669"/>
    <property type="project" value="UniProtKB-KW"/>
</dbReference>
<dbReference type="GO" id="GO:0048315">
    <property type="term" value="P:conidium formation"/>
    <property type="evidence" value="ECO:0000315"/>
    <property type="project" value="AspGD"/>
</dbReference>
<dbReference type="GO" id="GO:0007186">
    <property type="term" value="P:G protein-coupled receptor signaling pathway"/>
    <property type="evidence" value="ECO:0000315"/>
    <property type="project" value="AspGD"/>
</dbReference>
<dbReference type="GO" id="GO:0042318">
    <property type="term" value="P:penicillin biosynthetic process"/>
    <property type="evidence" value="ECO:0000315"/>
    <property type="project" value="AspGD"/>
</dbReference>
<dbReference type="GO" id="GO:0000750">
    <property type="term" value="P:pheromone-dependent signal transduction involved in conjugation with cellular fusion"/>
    <property type="evidence" value="ECO:0000318"/>
    <property type="project" value="GO_Central"/>
</dbReference>
<dbReference type="GO" id="GO:1900198">
    <property type="term" value="P:positive regulation of penicillin biosynthetic process"/>
    <property type="evidence" value="ECO:0000315"/>
    <property type="project" value="AspGD"/>
</dbReference>
<dbReference type="GO" id="GO:0075306">
    <property type="term" value="P:regulation of conidium formation"/>
    <property type="evidence" value="ECO:0000315"/>
    <property type="project" value="AspGD"/>
</dbReference>
<dbReference type="GO" id="GO:1900376">
    <property type="term" value="P:regulation of secondary metabolite biosynthetic process"/>
    <property type="evidence" value="ECO:0000315"/>
    <property type="project" value="AspGD"/>
</dbReference>
<dbReference type="GO" id="GO:0010913">
    <property type="term" value="P:regulation of sterigmatocystin biosynthetic process"/>
    <property type="evidence" value="ECO:0000315"/>
    <property type="project" value="AspGD"/>
</dbReference>
<dbReference type="GO" id="GO:0044550">
    <property type="term" value="P:secondary metabolite biosynthetic process"/>
    <property type="evidence" value="ECO:0000315"/>
    <property type="project" value="AspGD"/>
</dbReference>
<dbReference type="GO" id="GO:0007165">
    <property type="term" value="P:signal transduction"/>
    <property type="evidence" value="ECO:0000315"/>
    <property type="project" value="AspGD"/>
</dbReference>
<dbReference type="GO" id="GO:0000909">
    <property type="term" value="P:sporocarp development involved in sexual reproduction"/>
    <property type="evidence" value="ECO:0000315"/>
    <property type="project" value="AspGD"/>
</dbReference>
<dbReference type="GO" id="GO:0045461">
    <property type="term" value="P:sterigmatocystin biosynthetic process"/>
    <property type="evidence" value="ECO:0000315"/>
    <property type="project" value="AspGD"/>
</dbReference>
<dbReference type="CDD" id="cd00066">
    <property type="entry name" value="G-alpha"/>
    <property type="match status" value="1"/>
</dbReference>
<dbReference type="FunFam" id="1.10.400.10:FF:000001">
    <property type="entry name" value="Guanine nucleotide-binding protein G(I) subunit alpha"/>
    <property type="match status" value="1"/>
</dbReference>
<dbReference type="FunFam" id="3.40.50.300:FF:000051">
    <property type="entry name" value="Guanine nucleotide-binding protein subunit alpha"/>
    <property type="match status" value="1"/>
</dbReference>
<dbReference type="FunFam" id="3.40.50.300:FF:000692">
    <property type="entry name" value="Guanine nucleotide-binding protein subunit alpha"/>
    <property type="match status" value="1"/>
</dbReference>
<dbReference type="Gene3D" id="1.10.400.10">
    <property type="entry name" value="GI Alpha 1, domain 2-like"/>
    <property type="match status" value="1"/>
</dbReference>
<dbReference type="Gene3D" id="3.40.50.300">
    <property type="entry name" value="P-loop containing nucleotide triphosphate hydrolases"/>
    <property type="match status" value="1"/>
</dbReference>
<dbReference type="InterPro" id="IPR002975">
    <property type="entry name" value="Fungi_Gprotein_alpha"/>
</dbReference>
<dbReference type="InterPro" id="IPR001019">
    <property type="entry name" value="Gprotein_alpha_su"/>
</dbReference>
<dbReference type="InterPro" id="IPR011025">
    <property type="entry name" value="GproteinA_insert"/>
</dbReference>
<dbReference type="InterPro" id="IPR027417">
    <property type="entry name" value="P-loop_NTPase"/>
</dbReference>
<dbReference type="PANTHER" id="PTHR10218">
    <property type="entry name" value="GTP-BINDING PROTEIN ALPHA SUBUNIT"/>
    <property type="match status" value="1"/>
</dbReference>
<dbReference type="PANTHER" id="PTHR10218:SF302">
    <property type="entry name" value="GUANINE NUCLEOTIDE-BINDING PROTEIN ALPHA-5 SUBUNIT"/>
    <property type="match status" value="1"/>
</dbReference>
<dbReference type="Pfam" id="PF00503">
    <property type="entry name" value="G-alpha"/>
    <property type="match status" value="1"/>
</dbReference>
<dbReference type="PRINTS" id="PR00318">
    <property type="entry name" value="GPROTEINA"/>
</dbReference>
<dbReference type="PRINTS" id="PR01241">
    <property type="entry name" value="GPROTEINAFNG"/>
</dbReference>
<dbReference type="SMART" id="SM00275">
    <property type="entry name" value="G_alpha"/>
    <property type="match status" value="1"/>
</dbReference>
<dbReference type="SUPFAM" id="SSF52540">
    <property type="entry name" value="P-loop containing nucleoside triphosphate hydrolases"/>
    <property type="match status" value="1"/>
</dbReference>
<dbReference type="SUPFAM" id="SSF47895">
    <property type="entry name" value="Transducin (alpha subunit), insertion domain"/>
    <property type="match status" value="1"/>
</dbReference>
<dbReference type="PROSITE" id="PS51882">
    <property type="entry name" value="G_ALPHA"/>
    <property type="match status" value="1"/>
</dbReference>